<proteinExistence type="inferred from homology"/>
<dbReference type="EMBL" id="CP000820">
    <property type="protein sequence ID" value="ABW15375.1"/>
    <property type="molecule type" value="Genomic_DNA"/>
</dbReference>
<dbReference type="RefSeq" id="WP_020463468.1">
    <property type="nucleotide sequence ID" value="NC_009921.1"/>
</dbReference>
<dbReference type="SMR" id="A8LB14"/>
<dbReference type="STRING" id="298653.Franean1_6031"/>
<dbReference type="KEGG" id="fre:Franean1_6031"/>
<dbReference type="eggNOG" id="COG1841">
    <property type="taxonomic scope" value="Bacteria"/>
</dbReference>
<dbReference type="HOGENOM" id="CLU_131047_2_1_11"/>
<dbReference type="GO" id="GO:0022625">
    <property type="term" value="C:cytosolic large ribosomal subunit"/>
    <property type="evidence" value="ECO:0007669"/>
    <property type="project" value="TreeGrafter"/>
</dbReference>
<dbReference type="GO" id="GO:0003735">
    <property type="term" value="F:structural constituent of ribosome"/>
    <property type="evidence" value="ECO:0007669"/>
    <property type="project" value="InterPro"/>
</dbReference>
<dbReference type="GO" id="GO:0006412">
    <property type="term" value="P:translation"/>
    <property type="evidence" value="ECO:0007669"/>
    <property type="project" value="UniProtKB-UniRule"/>
</dbReference>
<dbReference type="CDD" id="cd01658">
    <property type="entry name" value="Ribosomal_L30"/>
    <property type="match status" value="1"/>
</dbReference>
<dbReference type="FunFam" id="3.30.1390.20:FF:000001">
    <property type="entry name" value="50S ribosomal protein L30"/>
    <property type="match status" value="1"/>
</dbReference>
<dbReference type="Gene3D" id="3.30.1390.20">
    <property type="entry name" value="Ribosomal protein L30, ferredoxin-like fold domain"/>
    <property type="match status" value="1"/>
</dbReference>
<dbReference type="HAMAP" id="MF_01371_B">
    <property type="entry name" value="Ribosomal_uL30_B"/>
    <property type="match status" value="1"/>
</dbReference>
<dbReference type="InterPro" id="IPR036919">
    <property type="entry name" value="Ribo_uL30_ferredoxin-like_sf"/>
</dbReference>
<dbReference type="InterPro" id="IPR005996">
    <property type="entry name" value="Ribosomal_uL30_bac-type"/>
</dbReference>
<dbReference type="InterPro" id="IPR016082">
    <property type="entry name" value="Ribosomal_uL30_ferredoxin-like"/>
</dbReference>
<dbReference type="NCBIfam" id="TIGR01308">
    <property type="entry name" value="rpmD_bact"/>
    <property type="match status" value="1"/>
</dbReference>
<dbReference type="PANTHER" id="PTHR15892:SF2">
    <property type="entry name" value="LARGE RIBOSOMAL SUBUNIT PROTEIN UL30M"/>
    <property type="match status" value="1"/>
</dbReference>
<dbReference type="PANTHER" id="PTHR15892">
    <property type="entry name" value="MITOCHONDRIAL RIBOSOMAL PROTEIN L30"/>
    <property type="match status" value="1"/>
</dbReference>
<dbReference type="Pfam" id="PF00327">
    <property type="entry name" value="Ribosomal_L30"/>
    <property type="match status" value="1"/>
</dbReference>
<dbReference type="PIRSF" id="PIRSF002211">
    <property type="entry name" value="Ribosomal_L30_bac-type"/>
    <property type="match status" value="1"/>
</dbReference>
<dbReference type="SUPFAM" id="SSF55129">
    <property type="entry name" value="Ribosomal protein L30p/L7e"/>
    <property type="match status" value="1"/>
</dbReference>
<protein>
    <recommendedName>
        <fullName evidence="1">Large ribosomal subunit protein uL30</fullName>
    </recommendedName>
    <alternativeName>
        <fullName evidence="2">50S ribosomal protein L30</fullName>
    </alternativeName>
</protein>
<evidence type="ECO:0000255" key="1">
    <source>
        <dbReference type="HAMAP-Rule" id="MF_01371"/>
    </source>
</evidence>
<evidence type="ECO:0000305" key="2"/>
<gene>
    <name evidence="1" type="primary">rpmD</name>
    <name type="ordered locus">Franean1_6031</name>
</gene>
<organism>
    <name type="scientific">Parafrankia sp. (strain EAN1pec)</name>
    <dbReference type="NCBI Taxonomy" id="298653"/>
    <lineage>
        <taxon>Bacteria</taxon>
        <taxon>Bacillati</taxon>
        <taxon>Actinomycetota</taxon>
        <taxon>Actinomycetes</taxon>
        <taxon>Frankiales</taxon>
        <taxon>Frankiaceae</taxon>
        <taxon>Parafrankia</taxon>
    </lineage>
</organism>
<keyword id="KW-0687">Ribonucleoprotein</keyword>
<keyword id="KW-0689">Ribosomal protein</keyword>
<accession>A8LB14</accession>
<sequence length="61" mass="6830">MAKLRITQIRSGIGGTRNQRETLRTLGLRKINASTVRDDRPEVLGMIATVTHLVRVEEVDS</sequence>
<reference key="1">
    <citation type="journal article" date="2007" name="Genome Res.">
        <title>Genome characteristics of facultatively symbiotic Frankia sp. strains reflect host range and host plant biogeography.</title>
        <authorList>
            <person name="Normand P."/>
            <person name="Lapierre P."/>
            <person name="Tisa L.S."/>
            <person name="Gogarten J.P."/>
            <person name="Alloisio N."/>
            <person name="Bagnarol E."/>
            <person name="Bassi C.A."/>
            <person name="Berry A.M."/>
            <person name="Bickhart D.M."/>
            <person name="Choisne N."/>
            <person name="Couloux A."/>
            <person name="Cournoyer B."/>
            <person name="Cruveiller S."/>
            <person name="Daubin V."/>
            <person name="Demange N."/>
            <person name="Francino M.P."/>
            <person name="Goltsman E."/>
            <person name="Huang Y."/>
            <person name="Kopp O.R."/>
            <person name="Labarre L."/>
            <person name="Lapidus A."/>
            <person name="Lavire C."/>
            <person name="Marechal J."/>
            <person name="Martinez M."/>
            <person name="Mastronunzio J.E."/>
            <person name="Mullin B.C."/>
            <person name="Niemann J."/>
            <person name="Pujic P."/>
            <person name="Rawnsley T."/>
            <person name="Rouy Z."/>
            <person name="Schenowitz C."/>
            <person name="Sellstedt A."/>
            <person name="Tavares F."/>
            <person name="Tomkins J.P."/>
            <person name="Vallenet D."/>
            <person name="Valverde C."/>
            <person name="Wall L.G."/>
            <person name="Wang Y."/>
            <person name="Medigue C."/>
            <person name="Benson D.R."/>
        </authorList>
    </citation>
    <scope>NUCLEOTIDE SEQUENCE [LARGE SCALE GENOMIC DNA]</scope>
    <source>
        <strain>EAN1pec</strain>
    </source>
</reference>
<name>RL30_PARS2</name>
<feature type="chain" id="PRO_1000144686" description="Large ribosomal subunit protein uL30">
    <location>
        <begin position="1"/>
        <end position="61"/>
    </location>
</feature>
<comment type="subunit">
    <text evidence="1">Part of the 50S ribosomal subunit.</text>
</comment>
<comment type="similarity">
    <text evidence="1">Belongs to the universal ribosomal protein uL30 family.</text>
</comment>